<evidence type="ECO:0000250" key="1"/>
<evidence type="ECO:0000305" key="2"/>
<reference key="1">
    <citation type="journal article" date="2003" name="Proc. Natl. Acad. Sci. U.S.A.">
        <title>The complete genome sequence of Mycobacterium bovis.</title>
        <authorList>
            <person name="Garnier T."/>
            <person name="Eiglmeier K."/>
            <person name="Camus J.-C."/>
            <person name="Medina N."/>
            <person name="Mansoor H."/>
            <person name="Pryor M."/>
            <person name="Duthoy S."/>
            <person name="Grondin S."/>
            <person name="Lacroix C."/>
            <person name="Monsempe C."/>
            <person name="Simon S."/>
            <person name="Harris B."/>
            <person name="Atkin R."/>
            <person name="Doggett J."/>
            <person name="Mayes R."/>
            <person name="Keating L."/>
            <person name="Wheeler P.R."/>
            <person name="Parkhill J."/>
            <person name="Barrell B.G."/>
            <person name="Cole S.T."/>
            <person name="Gordon S.V."/>
            <person name="Hewinson R.G."/>
        </authorList>
    </citation>
    <scope>NUCLEOTIDE SEQUENCE [LARGE SCALE GENOMIC DNA]</scope>
    <source>
        <strain>ATCC BAA-935 / AF2122/97</strain>
    </source>
</reference>
<reference key="2">
    <citation type="journal article" date="2017" name="Genome Announc.">
        <title>Updated reference genome sequence and annotation of Mycobacterium bovis AF2122/97.</title>
        <authorList>
            <person name="Malone K.M."/>
            <person name="Farrell D."/>
            <person name="Stuber T.P."/>
            <person name="Schubert O.T."/>
            <person name="Aebersold R."/>
            <person name="Robbe-Austerman S."/>
            <person name="Gordon S.V."/>
        </authorList>
    </citation>
    <scope>NUCLEOTIDE SEQUENCE [LARGE SCALE GENOMIC DNA]</scope>
    <scope>GENOME REANNOTATION</scope>
    <source>
        <strain>ATCC BAA-935 / AF2122/97</strain>
    </source>
</reference>
<accession>Q7U2D4</accession>
<accession>A0A1R3XVY9</accession>
<accession>X2BEG3</accession>
<name>Y289_MYCBO</name>
<dbReference type="EC" id="2.1.1.-"/>
<dbReference type="EMBL" id="LT708304">
    <property type="protein sequence ID" value="SIT98813.1"/>
    <property type="molecule type" value="Genomic_DNA"/>
</dbReference>
<dbReference type="RefSeq" id="NP_853953.1">
    <property type="nucleotide sequence ID" value="NC_002945.3"/>
</dbReference>
<dbReference type="RefSeq" id="WP_003401448.1">
    <property type="nucleotide sequence ID" value="NC_002945.4"/>
</dbReference>
<dbReference type="SMR" id="Q7U2D4"/>
<dbReference type="PATRIC" id="fig|233413.5.peg.317"/>
<dbReference type="Proteomes" id="UP000001419">
    <property type="component" value="Chromosome"/>
</dbReference>
<dbReference type="GO" id="GO:0008168">
    <property type="term" value="F:methyltransferase activity"/>
    <property type="evidence" value="ECO:0007669"/>
    <property type="project" value="UniProtKB-KW"/>
</dbReference>
<dbReference type="GO" id="GO:0032259">
    <property type="term" value="P:methylation"/>
    <property type="evidence" value="ECO:0007669"/>
    <property type="project" value="UniProtKB-KW"/>
</dbReference>
<dbReference type="FunFam" id="3.40.50.150:FF:000152">
    <property type="entry name" value="S-adenosyl-L-methionine-dependent methyltransferase"/>
    <property type="match status" value="1"/>
</dbReference>
<dbReference type="Gene3D" id="3.40.50.150">
    <property type="entry name" value="Vaccinia Virus protein VP39"/>
    <property type="match status" value="1"/>
</dbReference>
<dbReference type="InterPro" id="IPR007213">
    <property type="entry name" value="Ppm1/Ppm2/Tcmp"/>
</dbReference>
<dbReference type="InterPro" id="IPR029063">
    <property type="entry name" value="SAM-dependent_MTases_sf"/>
</dbReference>
<dbReference type="InterPro" id="IPR011610">
    <property type="entry name" value="SAM_mthyl_Trfase_ML2640-like"/>
</dbReference>
<dbReference type="NCBIfam" id="TIGR00027">
    <property type="entry name" value="mthyl_TIGR00027"/>
    <property type="match status" value="1"/>
</dbReference>
<dbReference type="PANTHER" id="PTHR43619">
    <property type="entry name" value="S-ADENOSYL-L-METHIONINE-DEPENDENT METHYLTRANSFERASE YKTD-RELATED"/>
    <property type="match status" value="1"/>
</dbReference>
<dbReference type="PANTHER" id="PTHR43619:SF2">
    <property type="entry name" value="S-ADENOSYL-L-METHIONINE-DEPENDENT METHYLTRANSFERASES SUPERFAMILY PROTEIN"/>
    <property type="match status" value="1"/>
</dbReference>
<dbReference type="Pfam" id="PF04072">
    <property type="entry name" value="LCM"/>
    <property type="match status" value="1"/>
</dbReference>
<dbReference type="SUPFAM" id="SSF53335">
    <property type="entry name" value="S-adenosyl-L-methionine-dependent methyltransferases"/>
    <property type="match status" value="1"/>
</dbReference>
<keyword id="KW-0489">Methyltransferase</keyword>
<keyword id="KW-1185">Reference proteome</keyword>
<keyword id="KW-0949">S-adenosyl-L-methionine</keyword>
<keyword id="KW-0808">Transferase</keyword>
<comment type="function">
    <text evidence="1">Exhibits S-adenosyl-L-methionine-dependent methyltransferase activity.</text>
</comment>
<comment type="similarity">
    <text evidence="2">Belongs to the UPF0677 family.</text>
</comment>
<organism>
    <name type="scientific">Mycobacterium bovis (strain ATCC BAA-935 / AF2122/97)</name>
    <dbReference type="NCBI Taxonomy" id="233413"/>
    <lineage>
        <taxon>Bacteria</taxon>
        <taxon>Bacillati</taxon>
        <taxon>Actinomycetota</taxon>
        <taxon>Actinomycetes</taxon>
        <taxon>Mycobacteriales</taxon>
        <taxon>Mycobacteriaceae</taxon>
        <taxon>Mycobacterium</taxon>
        <taxon>Mycobacterium tuberculosis complex</taxon>
    </lineage>
</organism>
<gene>
    <name type="ordered locus">BQ2027_MB0289</name>
</gene>
<protein>
    <recommendedName>
        <fullName>Putative S-adenosyl-L-methionine-dependent methyltransferase Mb0289</fullName>
        <ecNumber>2.1.1.-</ecNumber>
    </recommendedName>
</protein>
<proteinExistence type="inferred from homology"/>
<feature type="chain" id="PRO_0000361134" description="Putative S-adenosyl-L-methionine-dependent methyltransferase Mb0289">
    <location>
        <begin position="1"/>
        <end position="302"/>
    </location>
</feature>
<feature type="binding site" evidence="1">
    <location>
        <position position="126"/>
    </location>
    <ligand>
        <name>S-adenosyl-L-methionine</name>
        <dbReference type="ChEBI" id="CHEBI:59789"/>
    </ligand>
</feature>
<feature type="binding site" evidence="1">
    <location>
        <begin position="155"/>
        <end position="156"/>
    </location>
    <ligand>
        <name>S-adenosyl-L-methionine</name>
        <dbReference type="ChEBI" id="CHEBI:59789"/>
    </ligand>
</feature>
<sequence length="302" mass="32998">MRTEGDSWDITTSVGSTALFVATARALEAQKSDPLVVDPYAEAFCRAVGGSWADVLDGKLPDHKLKSTDFGEHFVNFQGARTKYFDEYFRRAAAAGARQVVILAAGLDSRAYRLPWPDGTTVFELDRPQVLDFKREVLASHGAQPRALRREIAVDLRDDWPQALRDSGFDAAAPSAWIAEGLLIYLPATAQERLFTGIDALAGRRSHVAVEDGAPMGPDEYAAKVEEERAAIAEGAEEHPFFQLVYNERCAPAAEWFGERGWTAVATLLNDYLEAVGRPVPGPESEAGPMFARNTLVSAARV</sequence>